<feature type="chain" id="PRO_0000324271" description="Non-structural protein 1">
    <location>
        <begin position="1"/>
        <end position="230"/>
    </location>
</feature>
<feature type="region of interest" description="RNA-binding and homodimerization" evidence="1">
    <location>
        <begin position="1"/>
        <end position="73"/>
    </location>
</feature>
<feature type="region of interest" description="CPSF4-binding" evidence="1">
    <location>
        <begin position="180"/>
        <end position="215"/>
    </location>
</feature>
<feature type="region of interest" description="Disordered" evidence="2">
    <location>
        <begin position="204"/>
        <end position="230"/>
    </location>
</feature>
<feature type="region of interest" description="PABPN1-binding" evidence="1">
    <location>
        <begin position="223"/>
        <end position="230"/>
    </location>
</feature>
<feature type="short sequence motif" description="Nuclear localization signal" evidence="1">
    <location>
        <begin position="34"/>
        <end position="38"/>
    </location>
</feature>
<feature type="short sequence motif" description="Nuclear export signal" evidence="1">
    <location>
        <begin position="137"/>
        <end position="146"/>
    </location>
</feature>
<feature type="sequence conflict" description="In Ref. 2; ABB21766." ref="2">
    <original>V</original>
    <variation>M</variation>
    <location>
        <position position="106"/>
    </location>
</feature>
<feature type="sequence conflict" description="In Ref. 2; ABB21766." ref="2">
    <original>T</original>
    <variation>I</variation>
    <location>
        <position position="156"/>
    </location>
</feature>
<gene>
    <name evidence="1" type="primary">NS</name>
</gene>
<keyword id="KW-0025">Alternative splicing</keyword>
<keyword id="KW-1262">Eukaryotic host gene expression shutoff by virus</keyword>
<keyword id="KW-1035">Host cytoplasm</keyword>
<keyword id="KW-1190">Host gene expression shutoff by virus</keyword>
<keyword id="KW-1192">Host mRNA suppression by virus</keyword>
<keyword id="KW-1048">Host nucleus</keyword>
<keyword id="KW-0945">Host-virus interaction</keyword>
<keyword id="KW-1090">Inhibition of host innate immune response by virus</keyword>
<keyword id="KW-1114">Inhibition of host interferon signaling pathway by virus</keyword>
<keyword id="KW-1102">Inhibition of host PKR by virus</keyword>
<keyword id="KW-1103">Inhibition of host pre-mRNA processing by virus</keyword>
<keyword id="KW-1088">Inhibition of host RIG-I by virus</keyword>
<keyword id="KW-1113">Inhibition of host RLR pathway by virus</keyword>
<keyword id="KW-0922">Interferon antiviral system evasion</keyword>
<keyword id="KW-0694">RNA-binding</keyword>
<keyword id="KW-0832">Ubl conjugation</keyword>
<keyword id="KW-0899">Viral immunoevasion</keyword>
<reference key="1">
    <citation type="journal article" date="1998" name="Virus Res.">
        <title>Multiple alignment comparison of the non-structural genes of influenza A viruses.</title>
        <authorList>
            <person name="Suarez D.L."/>
            <person name="Perdue M.L."/>
        </authorList>
    </citation>
    <scope>NUCLEOTIDE SEQUENCE [GENOMIC RNA]</scope>
</reference>
<reference key="2">
    <citation type="journal article" date="2006" name="Science">
        <title>Large-scale sequence analysis of avian influenza isolates.</title>
        <authorList>
            <person name="Obenauer J.C."/>
            <person name="Denson J."/>
            <person name="Mehta P.K."/>
            <person name="Su X."/>
            <person name="Mukatira S."/>
            <person name="Finkelstein D.B."/>
            <person name="Xu X."/>
            <person name="Wang J."/>
            <person name="Ma J."/>
            <person name="Fan Y."/>
            <person name="Rakestraw K.M."/>
            <person name="Webster R.G."/>
            <person name="Hoffmann E."/>
            <person name="Krauss S."/>
            <person name="Zheng J."/>
            <person name="Zhang Z."/>
            <person name="Naeve C.W."/>
        </authorList>
    </citation>
    <scope>NUCLEOTIDE SEQUENCE [GENOMIC RNA]</scope>
</reference>
<accession>O57267</accession>
<accession>Q20NV5</accession>
<evidence type="ECO:0000255" key="1">
    <source>
        <dbReference type="HAMAP-Rule" id="MF_04066"/>
    </source>
</evidence>
<evidence type="ECO:0000256" key="2">
    <source>
        <dbReference type="SAM" id="MobiDB-lite"/>
    </source>
</evidence>
<organism>
    <name type="scientific">Influenza A virus (strain A/Gull/Minnesota/945/1980 H13N6)</name>
    <dbReference type="NCBI Taxonomy" id="385597"/>
    <lineage>
        <taxon>Viruses</taxon>
        <taxon>Riboviria</taxon>
        <taxon>Orthornavirae</taxon>
        <taxon>Negarnaviricota</taxon>
        <taxon>Polyploviricotina</taxon>
        <taxon>Insthoviricetes</taxon>
        <taxon>Articulavirales</taxon>
        <taxon>Orthomyxoviridae</taxon>
        <taxon>Alphainfluenzavirus</taxon>
        <taxon>Alphainfluenzavirus influenzae</taxon>
        <taxon>Influenza A virus</taxon>
    </lineage>
</organism>
<dbReference type="EMBL" id="U96738">
    <property type="protein sequence ID" value="AAB93935.1"/>
    <property type="molecule type" value="Genomic_RNA"/>
</dbReference>
<dbReference type="EMBL" id="CY005862">
    <property type="protein sequence ID" value="ABB21766.1"/>
    <property type="molecule type" value="Genomic_RNA"/>
</dbReference>
<dbReference type="SMR" id="O57267"/>
<dbReference type="Proteomes" id="UP000008581">
    <property type="component" value="Genome"/>
</dbReference>
<dbReference type="GO" id="GO:0030430">
    <property type="term" value="C:host cell cytoplasm"/>
    <property type="evidence" value="ECO:0007669"/>
    <property type="project" value="UniProtKB-SubCell"/>
</dbReference>
<dbReference type="GO" id="GO:0042025">
    <property type="term" value="C:host cell nucleus"/>
    <property type="evidence" value="ECO:0007669"/>
    <property type="project" value="UniProtKB-SubCell"/>
</dbReference>
<dbReference type="GO" id="GO:0030291">
    <property type="term" value="F:protein serine/threonine kinase inhibitor activity"/>
    <property type="evidence" value="ECO:0007669"/>
    <property type="project" value="UniProtKB-KW"/>
</dbReference>
<dbReference type="GO" id="GO:0003723">
    <property type="term" value="F:RNA binding"/>
    <property type="evidence" value="ECO:0007669"/>
    <property type="project" value="UniProtKB-KW"/>
</dbReference>
<dbReference type="GO" id="GO:0039540">
    <property type="term" value="P:symbiont-mediated suppression of host cytoplasmic pattern recognition receptor signaling pathway via inhibition of RIG-I activity"/>
    <property type="evidence" value="ECO:0007669"/>
    <property type="project" value="UniProtKB-KW"/>
</dbReference>
<dbReference type="GO" id="GO:0039657">
    <property type="term" value="P:symbiont-mediated suppression of host gene expression"/>
    <property type="evidence" value="ECO:0007669"/>
    <property type="project" value="UniProtKB-KW"/>
</dbReference>
<dbReference type="GO" id="GO:0039524">
    <property type="term" value="P:symbiont-mediated suppression of host mRNA processing"/>
    <property type="evidence" value="ECO:0007669"/>
    <property type="project" value="UniProtKB-KW"/>
</dbReference>
<dbReference type="GO" id="GO:0039580">
    <property type="term" value="P:symbiont-mediated suppression of host PKR/eIFalpha signaling"/>
    <property type="evidence" value="ECO:0007669"/>
    <property type="project" value="UniProtKB-KW"/>
</dbReference>
<dbReference type="GO" id="GO:0039502">
    <property type="term" value="P:symbiont-mediated suppression of host type I interferon-mediated signaling pathway"/>
    <property type="evidence" value="ECO:0007669"/>
    <property type="project" value="UniProtKB-KW"/>
</dbReference>
<dbReference type="FunFam" id="1.10.287.10:FF:000001">
    <property type="entry name" value="Non-structural protein 1"/>
    <property type="match status" value="1"/>
</dbReference>
<dbReference type="FunFam" id="3.30.420.330:FF:000001">
    <property type="entry name" value="Non-structural protein 1"/>
    <property type="match status" value="1"/>
</dbReference>
<dbReference type="Gene3D" id="3.30.420.330">
    <property type="entry name" value="Influenza virus non-structural protein, effector domain"/>
    <property type="match status" value="1"/>
</dbReference>
<dbReference type="Gene3D" id="1.10.287.10">
    <property type="entry name" value="S15/NS1, RNA-binding"/>
    <property type="match status" value="1"/>
</dbReference>
<dbReference type="HAMAP" id="MF_04066">
    <property type="entry name" value="INFV_NS1"/>
    <property type="match status" value="1"/>
</dbReference>
<dbReference type="InterPro" id="IPR004208">
    <property type="entry name" value="NS1"/>
</dbReference>
<dbReference type="InterPro" id="IPR000256">
    <property type="entry name" value="NS1A"/>
</dbReference>
<dbReference type="InterPro" id="IPR038064">
    <property type="entry name" value="NS1A_effect_dom-like_sf"/>
</dbReference>
<dbReference type="InterPro" id="IPR009068">
    <property type="entry name" value="uS15_NS1_RNA-bd_sf"/>
</dbReference>
<dbReference type="Pfam" id="PF00600">
    <property type="entry name" value="Flu_NS1"/>
    <property type="match status" value="1"/>
</dbReference>
<dbReference type="SUPFAM" id="SSF143021">
    <property type="entry name" value="Ns1 effector domain-like"/>
    <property type="match status" value="1"/>
</dbReference>
<dbReference type="SUPFAM" id="SSF47060">
    <property type="entry name" value="S15/NS1 RNA-binding domain"/>
    <property type="match status" value="1"/>
</dbReference>
<sequence length="230" mass="25793">MDSNTTSSFQVDCFLWHVRKRFADQEMGDAPFLDRIRRDQKSLKGRSITLGIDIEAATRAGKLIIERILDEESDEALKMNIASVPASRYVTDMTPEEMSRDWFMLVPKQKFAGPLCIRMDQAILDKNIILKANFSVAFDRLETLILLRAFTSEGATVGEISQLPSLPGHTSEDVKNAIGILIGGLEWNDNTVRVSETLQRFAWGSSNENGRPPFAPKQERKMAGTVESEV</sequence>
<organismHost>
    <name type="scientific">Aves</name>
    <dbReference type="NCBI Taxonomy" id="8782"/>
</organismHost>
<name>NS1_I80AD</name>
<protein>
    <recommendedName>
        <fullName evidence="1">Non-structural protein 1</fullName>
        <shortName evidence="1">NS1</shortName>
    </recommendedName>
    <alternativeName>
        <fullName evidence="1">NS1A</fullName>
    </alternativeName>
</protein>
<comment type="function">
    <text evidence="1">Inhibits post-transcriptional processing of cellular pre-mRNA, by binding and inhibiting two cellular proteins that are required for the 3'-end processing of cellular pre-mRNAs: the 30 kDa cleavage and polyadenylation specificity factor/CPSF4 and the poly(A)-binding protein 2/PABPN1. In turn, unprocessed 3' end pre-mRNAs accumulate in the host nucleus and are no longer exported to the cytoplasm. Cellular protein synthesis is thereby shut off very early after virus infection. Viral protein synthesis is not affected by the inhibition of the cellular 3' end processing machinery because the poly(A) tails of viral mRNAs are produced by the viral polymerase through a stuttering mechanism. Prevents the establishment of the cellular antiviral state by inhibiting TRIM25-mediated RIGI ubiquitination, which normally triggers the antiviral transduction signal that leads to the activation of type I IFN genes by transcription factors IRF3 and IRF7. Also binds poly(A) and U6 snRNA. Inhibits the integrated stress response (ISR) in the infected cell by blocking dsRNA binding by EIF2AK2/PKR and further phosphorylation of EIF2S1/EIF-2ALPHA. Stress granule formation is thus inhibited, which allows protein synthesis and viral replication.</text>
</comment>
<comment type="subunit">
    <text evidence="1">Homodimer. Interacts with host TRIM25 (via coiled coil); this interaction specifically inhibits TRIM25 multimerization and TRIM25-mediated RIGI CARD ubiquitination. Interacts with human EIF2AK2/PKR, CPSF4, IVNS1ABP and PABPN1.</text>
</comment>
<comment type="subcellular location">
    <subcellularLocation>
        <location evidence="1">Host nucleus</location>
    </subcellularLocation>
    <subcellularLocation>
        <location evidence="1">Host cytoplasm</location>
    </subcellularLocation>
    <text evidence="1">In uninfected, transfected cells, NS1 is localized in the nucleus. Only in virus infected cells, the nuclear export signal is unveiled, presumably by a viral protein, and a fraction of NS1 is exported in the cytoplasm.</text>
</comment>
<comment type="alternative products">
    <event type="alternative splicing"/>
    <isoform>
        <id>O57267-1</id>
        <name>NS1</name>
        <sequence type="displayed"/>
    </isoform>
    <isoform>
        <id>O57266-1</id>
        <name>NEP</name>
        <name>NS2</name>
        <sequence type="external"/>
    </isoform>
</comment>
<comment type="domain">
    <text evidence="1">The dsRNA-binding region is required for suppression of RNA silencing.</text>
</comment>
<comment type="PTM">
    <text evidence="1">Upon interferon induction, ISGylated via host HERC5; this results in the impairment of NS1 interaction with RNA targets due to its inability to form homodimers and to interact with host EIF2AK2/PKR.</text>
</comment>
<comment type="similarity">
    <text evidence="1">Belongs to the influenza A viruses NS1 family.</text>
</comment>
<proteinExistence type="inferred from homology"/>